<dbReference type="EMBL" id="AE006641">
    <property type="protein sequence ID" value="AAK42417.1"/>
    <property type="molecule type" value="Genomic_DNA"/>
</dbReference>
<dbReference type="PIR" id="B90395">
    <property type="entry name" value="B90395"/>
</dbReference>
<dbReference type="RefSeq" id="WP_009991542.1">
    <property type="nucleotide sequence ID" value="NC_002754.1"/>
</dbReference>
<dbReference type="SMR" id="Q97WH0"/>
<dbReference type="STRING" id="273057.SSO2249"/>
<dbReference type="PaxDb" id="273057-SSO2249"/>
<dbReference type="EnsemblBacteria" id="AAK42417">
    <property type="protein sequence ID" value="AAK42417"/>
    <property type="gene ID" value="SSO2249"/>
</dbReference>
<dbReference type="KEGG" id="sso:SSO2249"/>
<dbReference type="PATRIC" id="fig|273057.12.peg.2344"/>
<dbReference type="eggNOG" id="arCOG00368">
    <property type="taxonomic scope" value="Archaea"/>
</dbReference>
<dbReference type="HOGENOM" id="CLU_004785_0_2_2"/>
<dbReference type="InParanoid" id="Q97WH0"/>
<dbReference type="PhylomeDB" id="Q97WH0"/>
<dbReference type="Proteomes" id="UP000001974">
    <property type="component" value="Chromosome"/>
</dbReference>
<dbReference type="GO" id="GO:1990391">
    <property type="term" value="C:DNA repair complex"/>
    <property type="evidence" value="ECO:0000318"/>
    <property type="project" value="GO_Central"/>
</dbReference>
<dbReference type="GO" id="GO:0005524">
    <property type="term" value="F:ATP binding"/>
    <property type="evidence" value="ECO:0007669"/>
    <property type="project" value="UniProtKB-UniRule"/>
</dbReference>
<dbReference type="GO" id="GO:0016887">
    <property type="term" value="F:ATP hydrolysis activity"/>
    <property type="evidence" value="ECO:0007669"/>
    <property type="project" value="UniProtKB-UniRule"/>
</dbReference>
<dbReference type="GO" id="GO:0004529">
    <property type="term" value="F:DNA exonuclease activity"/>
    <property type="evidence" value="ECO:0000318"/>
    <property type="project" value="GO_Central"/>
</dbReference>
<dbReference type="GO" id="GO:0008270">
    <property type="term" value="F:zinc ion binding"/>
    <property type="evidence" value="ECO:0007669"/>
    <property type="project" value="UniProtKB-UniRule"/>
</dbReference>
<dbReference type="GO" id="GO:0006281">
    <property type="term" value="P:DNA repair"/>
    <property type="evidence" value="ECO:0000318"/>
    <property type="project" value="GO_Central"/>
</dbReference>
<dbReference type="GO" id="GO:0006302">
    <property type="term" value="P:double-strand break repair"/>
    <property type="evidence" value="ECO:0007669"/>
    <property type="project" value="UniProtKB-UniRule"/>
</dbReference>
<dbReference type="Gene3D" id="1.10.287.1490">
    <property type="match status" value="1"/>
</dbReference>
<dbReference type="Gene3D" id="1.10.287.510">
    <property type="entry name" value="Helix hairpin bin"/>
    <property type="match status" value="1"/>
</dbReference>
<dbReference type="Gene3D" id="3.40.50.300">
    <property type="entry name" value="P-loop containing nucleotide triphosphate hydrolases"/>
    <property type="match status" value="2"/>
</dbReference>
<dbReference type="HAMAP" id="MF_00449">
    <property type="entry name" value="RAD50"/>
    <property type="match status" value="1"/>
</dbReference>
<dbReference type="InterPro" id="IPR027417">
    <property type="entry name" value="P-loop_NTPase"/>
</dbReference>
<dbReference type="InterPro" id="IPR022982">
    <property type="entry name" value="Rad50_ATPase_archaeal"/>
</dbReference>
<dbReference type="InterPro" id="IPR003395">
    <property type="entry name" value="RecF/RecN/SMC_N"/>
</dbReference>
<dbReference type="InterPro" id="IPR013134">
    <property type="entry name" value="Zn_hook_RAD50"/>
</dbReference>
<dbReference type="PANTHER" id="PTHR32114">
    <property type="entry name" value="ABC TRANSPORTER ABCH.3"/>
    <property type="match status" value="1"/>
</dbReference>
<dbReference type="PANTHER" id="PTHR32114:SF2">
    <property type="entry name" value="ABC TRANSPORTER ABCH.3"/>
    <property type="match status" value="1"/>
</dbReference>
<dbReference type="Pfam" id="PF04423">
    <property type="entry name" value="Rad50_zn_hook"/>
    <property type="match status" value="1"/>
</dbReference>
<dbReference type="Pfam" id="PF02463">
    <property type="entry name" value="SMC_N"/>
    <property type="match status" value="1"/>
</dbReference>
<dbReference type="SUPFAM" id="SSF52540">
    <property type="entry name" value="P-loop containing nucleoside triphosphate hydrolases"/>
    <property type="match status" value="2"/>
</dbReference>
<dbReference type="SUPFAM" id="SSF75712">
    <property type="entry name" value="Rad50 coiled-coil Zn hook"/>
    <property type="match status" value="1"/>
</dbReference>
<dbReference type="PROSITE" id="PS51131">
    <property type="entry name" value="ZN_HOOK"/>
    <property type="match status" value="1"/>
</dbReference>
<protein>
    <recommendedName>
        <fullName evidence="1">DNA double-strand break repair Rad50 ATPase</fullName>
    </recommendedName>
</protein>
<keyword id="KW-0067">ATP-binding</keyword>
<keyword id="KW-0175">Coiled coil</keyword>
<keyword id="KW-0227">DNA damage</keyword>
<keyword id="KW-0234">DNA repair</keyword>
<keyword id="KW-0378">Hydrolase</keyword>
<keyword id="KW-0479">Metal-binding</keyword>
<keyword id="KW-0547">Nucleotide-binding</keyword>
<keyword id="KW-1185">Reference proteome</keyword>
<keyword id="KW-0862">Zinc</keyword>
<evidence type="ECO:0000255" key="1">
    <source>
        <dbReference type="HAMAP-Rule" id="MF_00449"/>
    </source>
</evidence>
<feature type="chain" id="PRO_0000138665" description="DNA double-strand break repair Rad50 ATPase">
    <location>
        <begin position="1"/>
        <end position="864"/>
    </location>
</feature>
<feature type="domain" description="Zinc-hook" evidence="1">
    <location>
        <begin position="380"/>
        <end position="478"/>
    </location>
</feature>
<feature type="coiled-coil region" evidence="1">
    <location>
        <begin position="176"/>
        <end position="319"/>
    </location>
</feature>
<feature type="coiled-coil region" evidence="1">
    <location>
        <begin position="376"/>
        <end position="413"/>
    </location>
</feature>
<feature type="coiled-coil region" evidence="1">
    <location>
        <begin position="440"/>
        <end position="697"/>
    </location>
</feature>
<feature type="binding site" evidence="1">
    <location>
        <begin position="32"/>
        <end position="38"/>
    </location>
    <ligand>
        <name>ATP</name>
        <dbReference type="ChEBI" id="CHEBI:30616"/>
    </ligand>
</feature>
<feature type="binding site" evidence="1">
    <location>
        <position position="131"/>
    </location>
    <ligand>
        <name>ATP</name>
        <dbReference type="ChEBI" id="CHEBI:30616"/>
    </ligand>
</feature>
<feature type="binding site" evidence="1">
    <location>
        <position position="426"/>
    </location>
    <ligand>
        <name>Zn(2+)</name>
        <dbReference type="ChEBI" id="CHEBI:29105"/>
    </ligand>
</feature>
<feature type="binding site" evidence="1">
    <location>
        <position position="429"/>
    </location>
    <ligand>
        <name>Zn(2+)</name>
        <dbReference type="ChEBI" id="CHEBI:29105"/>
    </ligand>
</feature>
<reference key="1">
    <citation type="journal article" date="2001" name="Proc. Natl. Acad. Sci. U.S.A.">
        <title>The complete genome of the crenarchaeon Sulfolobus solfataricus P2.</title>
        <authorList>
            <person name="She Q."/>
            <person name="Singh R.K."/>
            <person name="Confalonieri F."/>
            <person name="Zivanovic Y."/>
            <person name="Allard G."/>
            <person name="Awayez M.J."/>
            <person name="Chan-Weiher C.C.-Y."/>
            <person name="Clausen I.G."/>
            <person name="Curtis B.A."/>
            <person name="De Moors A."/>
            <person name="Erauso G."/>
            <person name="Fletcher C."/>
            <person name="Gordon P.M.K."/>
            <person name="Heikamp-de Jong I."/>
            <person name="Jeffries A.C."/>
            <person name="Kozera C.J."/>
            <person name="Medina N."/>
            <person name="Peng X."/>
            <person name="Thi-Ngoc H.P."/>
            <person name="Redder P."/>
            <person name="Schenk M.E."/>
            <person name="Theriault C."/>
            <person name="Tolstrup N."/>
            <person name="Charlebois R.L."/>
            <person name="Doolittle W.F."/>
            <person name="Duguet M."/>
            <person name="Gaasterland T."/>
            <person name="Garrett R.A."/>
            <person name="Ragan M.A."/>
            <person name="Sensen C.W."/>
            <person name="Van der Oost J."/>
        </authorList>
    </citation>
    <scope>NUCLEOTIDE SEQUENCE [LARGE SCALE GENOMIC DNA]</scope>
    <source>
        <strain>ATCC 35092 / DSM 1617 / JCM 11322 / P2</strain>
    </source>
</reference>
<proteinExistence type="inferred from homology"/>
<organism>
    <name type="scientific">Saccharolobus solfataricus (strain ATCC 35092 / DSM 1617 / JCM 11322 / P2)</name>
    <name type="common">Sulfolobus solfataricus</name>
    <dbReference type="NCBI Taxonomy" id="273057"/>
    <lineage>
        <taxon>Archaea</taxon>
        <taxon>Thermoproteota</taxon>
        <taxon>Thermoprotei</taxon>
        <taxon>Sulfolobales</taxon>
        <taxon>Sulfolobaceae</taxon>
        <taxon>Saccharolobus</taxon>
    </lineage>
</organism>
<gene>
    <name evidence="1" type="primary">rad50</name>
    <name type="ordered locus">SSO2249</name>
</gene>
<name>RAD50_SACS2</name>
<comment type="function">
    <text evidence="1">Part of the Rad50/Mre11 complex, which is involved in the early steps of DNA double-strand break (DSB) repair. The complex may facilitate opening of the processed DNA ends to aid in the recruitment of HerA and NurA. Rad50 controls the balance between DNA end bridging and DNA resection via ATP-dependent structural rearrangements of the Rad50/Mre11 complex.</text>
</comment>
<comment type="cofactor">
    <cofactor evidence="1">
        <name>Zn(2+)</name>
        <dbReference type="ChEBI" id="CHEBI:29105"/>
    </cofactor>
    <text evidence="1">Binds 1 zinc ion per homodimer.</text>
</comment>
<comment type="subunit">
    <text evidence="1">Homodimer. Forms a heterotetramer composed of two Mre11 subunits and two Rad50 subunits.</text>
</comment>
<comment type="domain">
    <text evidence="1">The two conserved Cys that bind zinc constitute the zinc-hook, which separates the large intramolecular coiled coil regions. The 2 Cys residues coordinate one molecule of zinc with the help of the 2 Cys residues of the zinc-hook of another Rad50 molecule, thereby forming a V-shaped homodimer.</text>
</comment>
<comment type="similarity">
    <text evidence="1">Belongs to the SMC family. RAD50 subfamily.</text>
</comment>
<sequence length="864" mass="101602">MRIDKITLTNFLSHEHSEIQFMGEINVIVGQNGAGKSSIIDGIVFSLFRTHSRGNNDNLIRKGSNRGSVTLYLSNEKDKIEIIRDIRSTTEDRLIRNQFPIARSATVVSNEIEKILGIDKDIALSTIIVRQGELDKILENFQEIMGKILKLELIEKLIDSRGPIVEFRKNLENKLRELDRIEQDYNNFKKTVEEKRARVLELKKDKEKLEDEIKNLEKRIKDIKDQFDEYEKKRNQYLKLTTTLKIKEGELNELNRSIEELRKQTENMDQLEKEINELENLRNIKLKFEKYEVLAKSHTEMSANVINLEKEIEEYEKAIRRKEELEPKYLKYKELERKLEELQPKYQQYLKLKSDLDSKLNLKERLEKDASELSNDIDKVNSLEQKVEETRKKQLNLRAQLAKVESLISEKNEIINNISQVEGETCPVCGRPLDEEHKQKIIKEAKSYILQLELNKNELEEELKKITNELNKIEREYRRLSNNKASYDNVMRQLKKLNEEIENLHSEIESLKNIDEEIKKINEEVKELKLYYEEFMRLSKYTKEELDKKRVKLDEMKKKKEEIEKEMRGLESELKGLDRKALESKILDLENKRVKLDEMKKKKGILEDYIRQVKLLQEEVKNLREEVNIIQFDENRYNELKTSLDAYNLSLKEKENRKSRIEGELESLEKDIEEISNRIANYELQLKDREKIINAINKLEKIRSALGERKLQSYIIMTTKQLIENNLNDIISKFDLSIKNVEMEIMPKTGRGRSSSGDILVYTNSGDTLPIVSLSGGERIALSIALRLAIAKALMSNTNFFILDEPTIHLDDQRKAYLIEIIRAAKESVPQIIVVTHDEEVVQAADYVIRVEKRGNKSFVREET</sequence>
<accession>Q97WH0</accession>